<reference key="1">
    <citation type="journal article" date="2009" name="Appl. Environ. Microbiol.">
        <title>Three genomes from the phylum Acidobacteria provide insight into the lifestyles of these microorganisms in soils.</title>
        <authorList>
            <person name="Ward N.L."/>
            <person name="Challacombe J.F."/>
            <person name="Janssen P.H."/>
            <person name="Henrissat B."/>
            <person name="Coutinho P.M."/>
            <person name="Wu M."/>
            <person name="Xie G."/>
            <person name="Haft D.H."/>
            <person name="Sait M."/>
            <person name="Badger J."/>
            <person name="Barabote R.D."/>
            <person name="Bradley B."/>
            <person name="Brettin T.S."/>
            <person name="Brinkac L.M."/>
            <person name="Bruce D."/>
            <person name="Creasy T."/>
            <person name="Daugherty S.C."/>
            <person name="Davidsen T.M."/>
            <person name="DeBoy R.T."/>
            <person name="Detter J.C."/>
            <person name="Dodson R.J."/>
            <person name="Durkin A.S."/>
            <person name="Ganapathy A."/>
            <person name="Gwinn-Giglio M."/>
            <person name="Han C.S."/>
            <person name="Khouri H."/>
            <person name="Kiss H."/>
            <person name="Kothari S.P."/>
            <person name="Madupu R."/>
            <person name="Nelson K.E."/>
            <person name="Nelson W.C."/>
            <person name="Paulsen I."/>
            <person name="Penn K."/>
            <person name="Ren Q."/>
            <person name="Rosovitz M.J."/>
            <person name="Selengut J.D."/>
            <person name="Shrivastava S."/>
            <person name="Sullivan S.A."/>
            <person name="Tapia R."/>
            <person name="Thompson L.S."/>
            <person name="Watkins K.L."/>
            <person name="Yang Q."/>
            <person name="Yu C."/>
            <person name="Zafar N."/>
            <person name="Zhou L."/>
            <person name="Kuske C.R."/>
        </authorList>
    </citation>
    <scope>NUCLEOTIDE SEQUENCE [LARGE SCALE GENOMIC DNA]</scope>
    <source>
        <strain>Ellin345</strain>
    </source>
</reference>
<evidence type="ECO:0000255" key="1">
    <source>
        <dbReference type="HAMAP-Rule" id="MF_01363"/>
    </source>
</evidence>
<evidence type="ECO:0000256" key="2">
    <source>
        <dbReference type="SAM" id="MobiDB-lite"/>
    </source>
</evidence>
<evidence type="ECO:0000305" key="3"/>
<feature type="chain" id="PRO_0000270630" description="Large ribosomal subunit protein bL21">
    <location>
        <begin position="1"/>
        <end position="131"/>
    </location>
</feature>
<feature type="region of interest" description="Disordered" evidence="2">
    <location>
        <begin position="106"/>
        <end position="131"/>
    </location>
</feature>
<feature type="compositionally biased region" description="Basic and acidic residues" evidence="2">
    <location>
        <begin position="106"/>
        <end position="116"/>
    </location>
</feature>
<name>RL21_KORVE</name>
<comment type="function">
    <text evidence="1">This protein binds to 23S rRNA in the presence of protein L20.</text>
</comment>
<comment type="subunit">
    <text evidence="1">Part of the 50S ribosomal subunit. Contacts protein L20.</text>
</comment>
<comment type="similarity">
    <text evidence="1">Belongs to the bacterial ribosomal protein bL21 family.</text>
</comment>
<keyword id="KW-1185">Reference proteome</keyword>
<keyword id="KW-0687">Ribonucleoprotein</keyword>
<keyword id="KW-0689">Ribosomal protein</keyword>
<keyword id="KW-0694">RNA-binding</keyword>
<keyword id="KW-0699">rRNA-binding</keyword>
<dbReference type="EMBL" id="CP000360">
    <property type="protein sequence ID" value="ABF39023.1"/>
    <property type="molecule type" value="Genomic_DNA"/>
</dbReference>
<dbReference type="RefSeq" id="WP_011520825.1">
    <property type="nucleotide sequence ID" value="NC_008009.1"/>
</dbReference>
<dbReference type="SMR" id="Q1IVS7"/>
<dbReference type="STRING" id="204669.Acid345_0018"/>
<dbReference type="EnsemblBacteria" id="ABF39023">
    <property type="protein sequence ID" value="ABF39023"/>
    <property type="gene ID" value="Acid345_0018"/>
</dbReference>
<dbReference type="KEGG" id="aba:Acid345_0018"/>
<dbReference type="eggNOG" id="COG0261">
    <property type="taxonomic scope" value="Bacteria"/>
</dbReference>
<dbReference type="HOGENOM" id="CLU_061463_3_0_0"/>
<dbReference type="OrthoDB" id="9813334at2"/>
<dbReference type="Proteomes" id="UP000002432">
    <property type="component" value="Chromosome"/>
</dbReference>
<dbReference type="GO" id="GO:0005737">
    <property type="term" value="C:cytoplasm"/>
    <property type="evidence" value="ECO:0007669"/>
    <property type="project" value="UniProtKB-ARBA"/>
</dbReference>
<dbReference type="GO" id="GO:1990904">
    <property type="term" value="C:ribonucleoprotein complex"/>
    <property type="evidence" value="ECO:0007669"/>
    <property type="project" value="UniProtKB-KW"/>
</dbReference>
<dbReference type="GO" id="GO:0005840">
    <property type="term" value="C:ribosome"/>
    <property type="evidence" value="ECO:0007669"/>
    <property type="project" value="UniProtKB-KW"/>
</dbReference>
<dbReference type="GO" id="GO:0019843">
    <property type="term" value="F:rRNA binding"/>
    <property type="evidence" value="ECO:0007669"/>
    <property type="project" value="UniProtKB-UniRule"/>
</dbReference>
<dbReference type="GO" id="GO:0003735">
    <property type="term" value="F:structural constituent of ribosome"/>
    <property type="evidence" value="ECO:0007669"/>
    <property type="project" value="InterPro"/>
</dbReference>
<dbReference type="GO" id="GO:0006412">
    <property type="term" value="P:translation"/>
    <property type="evidence" value="ECO:0007669"/>
    <property type="project" value="UniProtKB-UniRule"/>
</dbReference>
<dbReference type="HAMAP" id="MF_01363">
    <property type="entry name" value="Ribosomal_bL21"/>
    <property type="match status" value="1"/>
</dbReference>
<dbReference type="InterPro" id="IPR028909">
    <property type="entry name" value="bL21-like"/>
</dbReference>
<dbReference type="InterPro" id="IPR036164">
    <property type="entry name" value="bL21-like_sf"/>
</dbReference>
<dbReference type="InterPro" id="IPR001787">
    <property type="entry name" value="Ribosomal_bL21"/>
</dbReference>
<dbReference type="NCBIfam" id="TIGR00061">
    <property type="entry name" value="L21"/>
    <property type="match status" value="1"/>
</dbReference>
<dbReference type="PANTHER" id="PTHR21349">
    <property type="entry name" value="50S RIBOSOMAL PROTEIN L21"/>
    <property type="match status" value="1"/>
</dbReference>
<dbReference type="PANTHER" id="PTHR21349:SF0">
    <property type="entry name" value="LARGE RIBOSOMAL SUBUNIT PROTEIN BL21M"/>
    <property type="match status" value="1"/>
</dbReference>
<dbReference type="Pfam" id="PF00829">
    <property type="entry name" value="Ribosomal_L21p"/>
    <property type="match status" value="1"/>
</dbReference>
<dbReference type="SUPFAM" id="SSF141091">
    <property type="entry name" value="L21p-like"/>
    <property type="match status" value="1"/>
</dbReference>
<sequence>MYAVIRAGSKQFRVSPGDVIKVDSAPHSESGKLEIADVLAVSNGQGKFGSPENATVTAEILGDGRGDKILVFHYKRKKQYKKLQGHRQGFTALKITEINVDGEKFTIDDMPKKEAAPAKARRSTKKAAAAE</sequence>
<gene>
    <name evidence="1" type="primary">rplU</name>
    <name type="ordered locus">Acid345_0018</name>
</gene>
<protein>
    <recommendedName>
        <fullName evidence="1">Large ribosomal subunit protein bL21</fullName>
    </recommendedName>
    <alternativeName>
        <fullName evidence="3">50S ribosomal protein L21</fullName>
    </alternativeName>
</protein>
<organism>
    <name type="scientific">Koribacter versatilis (strain Ellin345)</name>
    <dbReference type="NCBI Taxonomy" id="204669"/>
    <lineage>
        <taxon>Bacteria</taxon>
        <taxon>Pseudomonadati</taxon>
        <taxon>Acidobacteriota</taxon>
        <taxon>Terriglobia</taxon>
        <taxon>Terriglobales</taxon>
        <taxon>Candidatus Korobacteraceae</taxon>
        <taxon>Candidatus Korobacter</taxon>
    </lineage>
</organism>
<accession>Q1IVS7</accession>
<proteinExistence type="inferred from homology"/>